<accession>A0A3Q7I9E2</accession>
<feature type="chain" id="PRO_0000457138" description="Cathecol O-methyltransferase 1">
    <location>
        <begin position="1"/>
        <end position="373"/>
    </location>
</feature>
<feature type="active site" description="Proton acceptor" evidence="2">
    <location>
        <position position="279"/>
    </location>
</feature>
<feature type="binding site" evidence="1">
    <location>
        <position position="209"/>
    </location>
    <ligand>
        <name>S-adenosyl-L-homocysteine</name>
        <dbReference type="ChEBI" id="CHEBI:57856"/>
    </ligand>
</feature>
<feature type="binding site" evidence="1">
    <location>
        <position position="232"/>
    </location>
    <ligand>
        <name>S-adenosyl-L-homocysteine</name>
        <dbReference type="ChEBI" id="CHEBI:57856"/>
    </ligand>
</feature>
<feature type="binding site" evidence="2">
    <location>
        <position position="232"/>
    </location>
    <ligand>
        <name>S-adenosyl-L-methionine</name>
        <dbReference type="ChEBI" id="CHEBI:59789"/>
    </ligand>
</feature>
<feature type="binding site" evidence="1">
    <location>
        <position position="252"/>
    </location>
    <ligand>
        <name>S-adenosyl-L-homocysteine</name>
        <dbReference type="ChEBI" id="CHEBI:57856"/>
    </ligand>
</feature>
<feature type="binding site" evidence="1">
    <location>
        <position position="253"/>
    </location>
    <ligand>
        <name>S-adenosyl-L-homocysteine</name>
        <dbReference type="ChEBI" id="CHEBI:57856"/>
    </ligand>
</feature>
<feature type="binding site" evidence="1">
    <location>
        <position position="265"/>
    </location>
    <ligand>
        <name>S-adenosyl-L-homocysteine</name>
        <dbReference type="ChEBI" id="CHEBI:57856"/>
    </ligand>
</feature>
<feature type="binding site" evidence="1">
    <location>
        <position position="266"/>
    </location>
    <ligand>
        <name>S-adenosyl-L-homocysteine</name>
        <dbReference type="ChEBI" id="CHEBI:57856"/>
    </ligand>
</feature>
<dbReference type="EC" id="2.1.1.-" evidence="3"/>
<dbReference type="SMR" id="A0A3Q7I9E2"/>
<dbReference type="STRING" id="4081.A0A3Q7I9E2"/>
<dbReference type="PaxDb" id="4081-Solyc10g005060.2.1"/>
<dbReference type="EnsemblPlants" id="Solyc10g005060.3.1">
    <property type="protein sequence ID" value="Solyc10g005060.3.1"/>
    <property type="gene ID" value="Solyc10g005060.3"/>
</dbReference>
<dbReference type="Gramene" id="Solyc10g005060.3.1">
    <property type="protein sequence ID" value="Solyc10g005060.3.1"/>
    <property type="gene ID" value="Solyc10g005060.3"/>
</dbReference>
<dbReference type="InParanoid" id="A0A3Q7I9E2"/>
<dbReference type="OMA" id="ADFSLHM"/>
<dbReference type="BioCyc" id="MetaCyc:MONOMER18C3-55"/>
<dbReference type="Proteomes" id="UP000004994">
    <property type="component" value="Chromosome 10"/>
</dbReference>
<dbReference type="GO" id="GO:0008171">
    <property type="term" value="F:O-methyltransferase activity"/>
    <property type="evidence" value="ECO:0000318"/>
    <property type="project" value="GO_Central"/>
</dbReference>
<dbReference type="GO" id="GO:0046983">
    <property type="term" value="F:protein dimerization activity"/>
    <property type="evidence" value="ECO:0007669"/>
    <property type="project" value="InterPro"/>
</dbReference>
<dbReference type="GO" id="GO:0008757">
    <property type="term" value="F:S-adenosylmethionine-dependent methyltransferase activity"/>
    <property type="evidence" value="ECO:0000318"/>
    <property type="project" value="GO_Central"/>
</dbReference>
<dbReference type="GO" id="GO:0009058">
    <property type="term" value="P:biosynthetic process"/>
    <property type="evidence" value="ECO:0000318"/>
    <property type="project" value="GO_Central"/>
</dbReference>
<dbReference type="GO" id="GO:0009813">
    <property type="term" value="P:flavonoid biosynthetic process"/>
    <property type="evidence" value="ECO:0007669"/>
    <property type="project" value="UniProtKB-ARBA"/>
</dbReference>
<dbReference type="GO" id="GO:0032259">
    <property type="term" value="P:methylation"/>
    <property type="evidence" value="ECO:0000318"/>
    <property type="project" value="GO_Central"/>
</dbReference>
<dbReference type="FunFam" id="1.10.10.10:FF:000357">
    <property type="entry name" value="Caffeic acid 3-O-methyltransferase"/>
    <property type="match status" value="1"/>
</dbReference>
<dbReference type="FunFam" id="3.40.50.150:FF:000061">
    <property type="entry name" value="Caffeic acid O-methyltransferase"/>
    <property type="match status" value="1"/>
</dbReference>
<dbReference type="Gene3D" id="3.40.50.150">
    <property type="entry name" value="Vaccinia Virus protein VP39"/>
    <property type="match status" value="1"/>
</dbReference>
<dbReference type="Gene3D" id="1.10.10.10">
    <property type="entry name" value="Winged helix-like DNA-binding domain superfamily/Winged helix DNA-binding domain"/>
    <property type="match status" value="1"/>
</dbReference>
<dbReference type="InterPro" id="IPR016461">
    <property type="entry name" value="COMT-like"/>
</dbReference>
<dbReference type="InterPro" id="IPR001077">
    <property type="entry name" value="O_MeTrfase_dom"/>
</dbReference>
<dbReference type="InterPro" id="IPR012967">
    <property type="entry name" value="Plant_O-MeTrfase_dimerisation"/>
</dbReference>
<dbReference type="InterPro" id="IPR029063">
    <property type="entry name" value="SAM-dependent_MTases_sf"/>
</dbReference>
<dbReference type="InterPro" id="IPR036388">
    <property type="entry name" value="WH-like_DNA-bd_sf"/>
</dbReference>
<dbReference type="InterPro" id="IPR036390">
    <property type="entry name" value="WH_DNA-bd_sf"/>
</dbReference>
<dbReference type="PANTHER" id="PTHR11746">
    <property type="entry name" value="O-METHYLTRANSFERASE"/>
    <property type="match status" value="1"/>
</dbReference>
<dbReference type="Pfam" id="PF08100">
    <property type="entry name" value="Dimerisation"/>
    <property type="match status" value="1"/>
</dbReference>
<dbReference type="Pfam" id="PF00891">
    <property type="entry name" value="Methyltransf_2"/>
    <property type="match status" value="1"/>
</dbReference>
<dbReference type="PIRSF" id="PIRSF005739">
    <property type="entry name" value="O-mtase"/>
    <property type="match status" value="1"/>
</dbReference>
<dbReference type="SUPFAM" id="SSF53335">
    <property type="entry name" value="S-adenosyl-L-methionine-dependent methyltransferases"/>
    <property type="match status" value="1"/>
</dbReference>
<dbReference type="SUPFAM" id="SSF46785">
    <property type="entry name" value="Winged helix' DNA-binding domain"/>
    <property type="match status" value="1"/>
</dbReference>
<dbReference type="PROSITE" id="PS51683">
    <property type="entry name" value="SAM_OMT_II"/>
    <property type="match status" value="1"/>
</dbReference>
<reference key="1">
    <citation type="journal article" date="2012" name="Nature">
        <title>The tomato genome sequence provides insights into fleshy fruit evolution.</title>
        <authorList>
            <consortium name="Tomato Genome Consortium"/>
        </authorList>
    </citation>
    <scope>NUCLEOTIDE SEQUENCE [LARGE SCALE GENOMIC DNA]</scope>
    <source>
        <strain>cv. Heinz 1706</strain>
    </source>
</reference>
<reference key="2">
    <citation type="journal article" date="2012" name="Plant J.">
        <title>A Solanum lycopersicum catechol-O-methyltransferase involved in synthesis of the flavor molecule guaiacol.</title>
        <authorList>
            <person name="Mageroy M.H."/>
            <person name="Tieman D.M."/>
            <person name="Floystad A."/>
            <person name="Taylor M.G."/>
            <person name="Klee H.J."/>
        </authorList>
    </citation>
    <scope>FUNCTION</scope>
    <scope>CATALYTIC ACTIVITY</scope>
    <scope>BIOPHYSICOCHEMICAL PROPERTIES</scope>
    <scope>DISRUPTION PHENOTYPE</scope>
</reference>
<comment type="function">
    <text evidence="3">O-methyltransferase that catalyzes the conversion of catechol to guaiacol (PubMed:22103597). Involved in the production of guaiacol in fruits (PubMed:22103597).</text>
</comment>
<comment type="catalytic activity">
    <reaction evidence="3">
        <text>catechol + S-adenosyl-L-methionine = guaiacol + S-adenosyl-L-homocysteine + H(+)</text>
        <dbReference type="Rhea" id="RHEA:72243"/>
        <dbReference type="ChEBI" id="CHEBI:15378"/>
        <dbReference type="ChEBI" id="CHEBI:18135"/>
        <dbReference type="ChEBI" id="CHEBI:28591"/>
        <dbReference type="ChEBI" id="CHEBI:57856"/>
        <dbReference type="ChEBI" id="CHEBI:59789"/>
    </reaction>
    <physiologicalReaction direction="left-to-right" evidence="3">
        <dbReference type="Rhea" id="RHEA:72244"/>
    </physiologicalReaction>
</comment>
<comment type="biophysicochemical properties">
    <kinetics>
        <KM evidence="3">8.36 uM for catechol</KM>
        <text evidence="3">kcat is 9.67 sec(-1) toward catechol.</text>
    </kinetics>
</comment>
<comment type="disruption phenotype">
    <text evidence="3">Significant reduction of fruit guaiacol emissions.</text>
</comment>
<comment type="similarity">
    <text evidence="5">Belongs to the class I-like SAM-binding methyltransferase superfamily. Cation-independent O-methyltransferase family. COMT subfamily.</text>
</comment>
<gene>
    <name evidence="4" type="primary">CTOMT1</name>
    <name evidence="6" type="ordered locus">Solyc10g005060</name>
</gene>
<proteinExistence type="evidence at protein level"/>
<keyword id="KW-0489">Methyltransferase</keyword>
<keyword id="KW-1185">Reference proteome</keyword>
<keyword id="KW-0949">S-adenosyl-L-methionine</keyword>
<keyword id="KW-0808">Transferase</keyword>
<sequence length="373" mass="41262">MGSTANIQLATQSEDEERNCTYAMQLLSSSVLPFVLHSTIQLDVFDILAKDKAATKLSALEIVSHMPNCKNPDAATMLDRMLYVLASYSLLDCSVVEEGNGVTERRYGLSRVGKFFVRDEDGASMGPLLALLQDKVFINSWFELKDAVLEGGVPFDRVHGVHAFEYPKLDPKFNDVFNQAMINHTTVVMKRILENYKGFENLKTLVDVGGGLGVNLKMITSKYPTIKGTNFDLPHVVQHAPSYPGVDHVGGDMFESVPQGDAIFMKVMSKSLAEAWILHDWSDGHCLKLLKNCHKALPDNGKVIVVEANLPVKPDTDTTVVGVSQCDLIMMAQNPGGKERSEQEFRALASEAGFKGVNLICCVCNFWVMEFYK</sequence>
<name>CTOMT_SOLLC</name>
<protein>
    <recommendedName>
        <fullName evidence="4">Cathecol O-methyltransferase 1</fullName>
        <ecNumber evidence="3">2.1.1.-</ecNumber>
    </recommendedName>
</protein>
<evidence type="ECO:0000250" key="1">
    <source>
        <dbReference type="UniProtKB" id="P28002"/>
    </source>
</evidence>
<evidence type="ECO:0000255" key="2">
    <source>
        <dbReference type="PROSITE-ProRule" id="PRU01020"/>
    </source>
</evidence>
<evidence type="ECO:0000269" key="3">
    <source>
    </source>
</evidence>
<evidence type="ECO:0000303" key="4">
    <source>
    </source>
</evidence>
<evidence type="ECO:0000305" key="5"/>
<evidence type="ECO:0000312" key="6">
    <source>
        <dbReference type="Proteomes" id="UP000004994"/>
    </source>
</evidence>
<organism>
    <name type="scientific">Solanum lycopersicum</name>
    <name type="common">Tomato</name>
    <name type="synonym">Lycopersicon esculentum</name>
    <dbReference type="NCBI Taxonomy" id="4081"/>
    <lineage>
        <taxon>Eukaryota</taxon>
        <taxon>Viridiplantae</taxon>
        <taxon>Streptophyta</taxon>
        <taxon>Embryophyta</taxon>
        <taxon>Tracheophyta</taxon>
        <taxon>Spermatophyta</taxon>
        <taxon>Magnoliopsida</taxon>
        <taxon>eudicotyledons</taxon>
        <taxon>Gunneridae</taxon>
        <taxon>Pentapetalae</taxon>
        <taxon>asterids</taxon>
        <taxon>lamiids</taxon>
        <taxon>Solanales</taxon>
        <taxon>Solanaceae</taxon>
        <taxon>Solanoideae</taxon>
        <taxon>Solaneae</taxon>
        <taxon>Solanum</taxon>
        <taxon>Solanum subgen. Lycopersicon</taxon>
    </lineage>
</organism>